<protein>
    <recommendedName>
        <fullName evidence="1">DNA-binding protein Fis</fullName>
    </recommendedName>
    <alternativeName>
        <fullName>Factor-for-inversion stimulation protein</fullName>
    </alternativeName>
    <alternativeName>
        <fullName>Hin recombinational enhancer-binding protein</fullName>
    </alternativeName>
</protein>
<gene>
    <name evidence="1" type="primary">fis</name>
    <name type="ordered locus">b3261</name>
    <name type="ordered locus">JW3229</name>
</gene>
<reference key="1">
    <citation type="journal article" date="1988" name="Proc. Natl. Acad. Sci. U.S.A.">
        <title>Isolation of the gene encoding the Hin recombinational enhancer binding protein.</title>
        <authorList>
            <person name="Johnson R.C."/>
            <person name="Ball C.A."/>
            <person name="Pfeffer D."/>
            <person name="Simon M.I."/>
        </authorList>
    </citation>
    <scope>NUCLEOTIDE SEQUENCE [GENOMIC DNA]</scope>
    <scope>PROTEIN SEQUENCE</scope>
</reference>
<reference key="2">
    <citation type="journal article" date="1988" name="Proc. Natl. Acad. Sci. U.S.A.">
        <title>Escherichia coli host factor for site-specific DNA inversion: cloning and characterization of the fis gene.</title>
        <authorList>
            <person name="Koch C."/>
            <person name="Vanderkerckhove J."/>
            <person name="Kahmann R."/>
        </authorList>
    </citation>
    <scope>NUCLEOTIDE SEQUENCE [GENOMIC DNA]</scope>
    <scope>PROTEIN SEQUENCE OF 1-29</scope>
</reference>
<reference key="3">
    <citation type="journal article" date="1992" name="J. Bacteriol.">
        <title>Dramatic changes in Fis levels upon nutrient upshift in Escherichia coli.</title>
        <authorList>
            <person name="Ball C.A."/>
            <person name="Osuna R."/>
            <person name="Ferguson K.C."/>
            <person name="Johnson R.C."/>
        </authorList>
    </citation>
    <scope>NUCLEOTIDE SEQUENCE [GENOMIC DNA]</scope>
</reference>
<reference key="4">
    <citation type="journal article" date="1997" name="Science">
        <title>The complete genome sequence of Escherichia coli K-12.</title>
        <authorList>
            <person name="Blattner F.R."/>
            <person name="Plunkett G. III"/>
            <person name="Bloch C.A."/>
            <person name="Perna N.T."/>
            <person name="Burland V."/>
            <person name="Riley M."/>
            <person name="Collado-Vides J."/>
            <person name="Glasner J.D."/>
            <person name="Rode C.K."/>
            <person name="Mayhew G.F."/>
            <person name="Gregor J."/>
            <person name="Davis N.W."/>
            <person name="Kirkpatrick H.A."/>
            <person name="Goeden M.A."/>
            <person name="Rose D.J."/>
            <person name="Mau B."/>
            <person name="Shao Y."/>
        </authorList>
    </citation>
    <scope>NUCLEOTIDE SEQUENCE [LARGE SCALE GENOMIC DNA]</scope>
    <source>
        <strain>K12 / MG1655 / ATCC 47076</strain>
    </source>
</reference>
<reference key="5">
    <citation type="journal article" date="2006" name="Mol. Syst. Biol.">
        <title>Highly accurate genome sequences of Escherichia coli K-12 strains MG1655 and W3110.</title>
        <authorList>
            <person name="Hayashi K."/>
            <person name="Morooka N."/>
            <person name="Yamamoto Y."/>
            <person name="Fujita K."/>
            <person name="Isono K."/>
            <person name="Choi S."/>
            <person name="Ohtsubo E."/>
            <person name="Baba T."/>
            <person name="Wanner B.L."/>
            <person name="Mori H."/>
            <person name="Horiuchi T."/>
        </authorList>
    </citation>
    <scope>NUCLEOTIDE SEQUENCE [LARGE SCALE GENOMIC DNA]</scope>
    <source>
        <strain>K12 / W3110 / ATCC 27325 / DSM 5911</strain>
    </source>
</reference>
<reference key="6">
    <citation type="journal article" date="1996" name="Mol. Microbiol.">
        <title>The ndh-binding protein (Nbp) regulates the ndh gene of Escherichia coli in response to growth phase and is identical to Fis.</title>
        <authorList>
            <person name="Green J."/>
            <person name="Anjum M.F."/>
            <person name="Guest J.R."/>
        </authorList>
    </citation>
    <scope>PROTEIN SEQUENCE OF 1-11</scope>
</reference>
<reference key="7">
    <citation type="journal article" date="1990" name="EMBO J.">
        <title>E.coli Fis protein activates ribosomal RNA transcription in vitro and in vivo.</title>
        <authorList>
            <person name="Ross W."/>
            <person name="Thompson J.F."/>
            <person name="Newlands J.T."/>
            <person name="Gourse R.L."/>
        </authorList>
    </citation>
    <scope>FUNCTION</scope>
</reference>
<reference key="8">
    <citation type="journal article" date="1996" name="Nucleic Acids Res.">
        <title>The Escherichia coli Fis protein prevents initiation of DNA replication from oriC in vitro.</title>
        <authorList>
            <person name="Wold S."/>
            <person name="Crooke E."/>
            <person name="Skarstad K."/>
        </authorList>
    </citation>
    <scope>FUNCTION</scope>
</reference>
<reference key="9">
    <citation type="journal article" date="1991" name="EMBO J.">
        <title>Identification of two functional regions in Fis: the N-terminus is required to promote Hin-mediated DNA inversion but not lambda excision.</title>
        <authorList>
            <person name="Osuna R."/>
            <person name="Finkel S.E."/>
            <person name="Johnson R.C."/>
        </authorList>
    </citation>
    <scope>MUTAGENESIS</scope>
    <scope>DOMAINS</scope>
</reference>
<reference key="10">
    <citation type="journal article" date="2001" name="J. Biol. Chem.">
        <title>The regulation of the Escherichia coli mazEF promoter involves an unusual alternating palindrome.</title>
        <authorList>
            <person name="Marianovsky I."/>
            <person name="Aizenman E."/>
            <person name="Engelberg-Kulka H."/>
            <person name="Glaser G."/>
        </authorList>
    </citation>
    <scope>BINDING TO THE MAZE-MAZF PROMOTER</scope>
    <source>
        <strain>K12 / MC4100 / ATCC 35695 / DSM 6574</strain>
    </source>
</reference>
<reference key="11">
    <citation type="journal article" date="2006" name="Nucleic Acids Res.">
        <title>Association of nucleoid proteins with coding and non-coding segments of the Escherichia coli genome.</title>
        <authorList>
            <person name="Grainger D.C."/>
            <person name="Hurd D."/>
            <person name="Goldberg M.D."/>
            <person name="Busby S.J."/>
        </authorList>
    </citation>
    <scope>FUNCTION</scope>
    <scope>DNA-BINDING</scope>
    <source>
        <strain>K12 / MG1655 / ATCC 47076</strain>
    </source>
</reference>
<reference key="12">
    <citation type="journal article" date="2011" name="Science">
        <title>Chromosome organization by a nucleoid-associated protein in live bacteria.</title>
        <authorList>
            <person name="Wang W."/>
            <person name="Li G.W."/>
            <person name="Chen C."/>
            <person name="Xie X.S."/>
            <person name="Zhuang X."/>
        </authorList>
    </citation>
    <scope>SUBCELLULAR LOCATION</scope>
    <source>
        <strain>K12 / BW25993</strain>
    </source>
</reference>
<reference key="13">
    <citation type="journal article" date="1991" name="Nature">
        <title>Three-dimensional structure of the E. coli DNA-binding protein FIS.</title>
        <authorList>
            <person name="Kostrewa D."/>
            <person name="Granzin J."/>
            <person name="Koch C."/>
            <person name="Choe H.-W."/>
            <person name="Raghunathan S."/>
            <person name="Wolf W."/>
            <person name="Labahn J."/>
            <person name="Kahmann R."/>
            <person name="Saenger W."/>
        </authorList>
    </citation>
    <scope>X-RAY CRYSTALLOGRAPHY (2.0 ANGSTROMS)</scope>
</reference>
<reference key="14">
    <citation type="journal article" date="1992" name="J. Mol. Biol.">
        <title>Crystal structure of the factor for inversion stimulation FIS at 2.0-A resolution.</title>
        <authorList>
            <person name="Kostrewa D."/>
            <person name="Granzin J."/>
            <person name="Stock D."/>
            <person name="Choe H.-W."/>
            <person name="Labahn J."/>
            <person name="Saenger W."/>
        </authorList>
    </citation>
    <scope>X-RAY CRYSTALLOGRAPHY (2.0 ANGSTROMS)</scope>
</reference>
<reference key="15">
    <citation type="journal article" date="1997" name="EMBO J.">
        <title>The transactivation region of the fis protein that controls site-specific DNA inversion contains extended mobile beta-hairpin arms.</title>
        <authorList>
            <person name="Safo M.K."/>
            <person name="Yang W.Z."/>
            <person name="Corselli L."/>
            <person name="Cramton S.E."/>
            <person name="Yuan H.S."/>
            <person name="Johnson R.C."/>
        </authorList>
    </citation>
    <scope>X-RAY CRYSTALLOGRAPHY (2.65 ANGSTROMS)</scope>
</reference>
<reference key="16">
    <citation type="journal article" date="2000" name="J. Mol. Biol.">
        <title>Structural analysis of the transcriptional activation region on fis: crystal structures of six fis mutants with different activation properties.</title>
        <authorList>
            <person name="Cheng Y.-S."/>
            <person name="Yang W.-Z."/>
            <person name="Johnson R.C."/>
            <person name="Yuan H.S."/>
        </authorList>
    </citation>
    <scope>X-RAY CRYSTALLOGRAPHY (1.9 ANGSTROMS) OF MUTANTS</scope>
</reference>
<keyword id="KW-0002">3D-structure</keyword>
<keyword id="KW-0010">Activator</keyword>
<keyword id="KW-0963">Cytoplasm</keyword>
<keyword id="KW-0903">Direct protein sequencing</keyword>
<keyword id="KW-0238">DNA-binding</keyword>
<keyword id="KW-1185">Reference proteome</keyword>
<keyword id="KW-0804">Transcription</keyword>
<keyword id="KW-0805">Transcription regulation</keyword>
<organism>
    <name type="scientific">Escherichia coli (strain K12)</name>
    <dbReference type="NCBI Taxonomy" id="83333"/>
    <lineage>
        <taxon>Bacteria</taxon>
        <taxon>Pseudomonadati</taxon>
        <taxon>Pseudomonadota</taxon>
        <taxon>Gammaproteobacteria</taxon>
        <taxon>Enterobacterales</taxon>
        <taxon>Enterobacteriaceae</taxon>
        <taxon>Escherichia</taxon>
    </lineage>
</organism>
<comment type="function">
    <text evidence="2 4 5">Activates ribosomal RNA transcription, as well other genes. Plays a direct role in upstream activation of rRNA promoters. Binds to a recombinational enhancer sequence that is required to stimulate hin-mediated DNA inversion. Prevents initiation of DNA replication from oriC. Binds to hundreds of transcriptionally active and inactive AT-rich sites, approximately half its binding sites are in non-coding DNA, which only accounts for about 10% of the genome (PubMed:16963779).</text>
</comment>
<comment type="subunit">
    <text>Homodimer.</text>
</comment>
<comment type="interaction">
    <interactant intactId="EBI-550170">
        <id>P0A6R3</id>
    </interactant>
    <interactant intactId="EBI-547059">
        <id>P30139</id>
        <label>thiG</label>
    </interactant>
    <organismsDiffer>false</organismsDiffer>
    <experiments>3</experiments>
</comment>
<comment type="interaction">
    <interactant intactId="EBI-550170">
        <id>P0A6R3</id>
    </interactant>
    <interactant intactId="EBI-9126792">
        <id>P64503</id>
        <label>yebV</label>
    </interactant>
    <organismsDiffer>false</organismsDiffer>
    <experiments>3</experiments>
</comment>
<comment type="subcellular location">
    <subcellularLocation>
        <location evidence="3">Cytoplasm</location>
        <location evidence="3">Nucleoid</location>
    </subcellularLocation>
    <text evidence="3">Scattered throughout the nucleoid (PubMed:21903814).</text>
</comment>
<comment type="similarity">
    <text evidence="1">Belongs to the transcriptional regulatory Fis family.</text>
</comment>
<accession>P0A6R3</accession>
<accession>P11028</accession>
<accession>P37404</accession>
<accession>Q2M8V4</accession>
<feature type="chain" id="PRO_0000203878" description="DNA-binding protein Fis">
    <location>
        <begin position="1"/>
        <end position="98"/>
    </location>
</feature>
<feature type="DNA-binding region" description="H-T-H motif" evidence="1">
    <location>
        <begin position="74"/>
        <end position="93"/>
    </location>
</feature>
<feature type="region of interest" description="Required for the stimulation of HIN-mediated recombination">
    <location>
        <begin position="17"/>
        <end position="44"/>
    </location>
</feature>
<feature type="strand" evidence="6">
    <location>
        <begin position="12"/>
        <end position="15"/>
    </location>
</feature>
<feature type="turn" evidence="7">
    <location>
        <begin position="18"/>
        <end position="20"/>
    </location>
</feature>
<feature type="strand" evidence="6">
    <location>
        <begin position="23"/>
        <end position="26"/>
    </location>
</feature>
<feature type="helix" evidence="6">
    <location>
        <begin position="27"/>
        <end position="42"/>
    </location>
</feature>
<feature type="helix" evidence="6">
    <location>
        <begin position="50"/>
        <end position="69"/>
    </location>
</feature>
<feature type="turn" evidence="6">
    <location>
        <begin position="70"/>
        <end position="72"/>
    </location>
</feature>
<feature type="helix" evidence="6">
    <location>
        <begin position="74"/>
        <end position="81"/>
    </location>
</feature>
<feature type="helix" evidence="6">
    <location>
        <begin position="85"/>
        <end position="94"/>
    </location>
</feature>
<dbReference type="EMBL" id="J03245">
    <property type="protein sequence ID" value="AAA83856.1"/>
    <property type="molecule type" value="Genomic_DNA"/>
</dbReference>
<dbReference type="EMBL" id="J03816">
    <property type="protein sequence ID" value="AAA98812.1"/>
    <property type="molecule type" value="Genomic_DNA"/>
</dbReference>
<dbReference type="EMBL" id="M95784">
    <property type="protein sequence ID" value="AAA23783.1"/>
    <property type="molecule type" value="Genomic_DNA"/>
</dbReference>
<dbReference type="EMBL" id="U18997">
    <property type="protein sequence ID" value="AAA58065.1"/>
    <property type="molecule type" value="Genomic_DNA"/>
</dbReference>
<dbReference type="EMBL" id="U00096">
    <property type="protein sequence ID" value="AAC76293.1"/>
    <property type="molecule type" value="Genomic_DNA"/>
</dbReference>
<dbReference type="EMBL" id="AP009048">
    <property type="protein sequence ID" value="BAE77302.1"/>
    <property type="molecule type" value="Genomic_DNA"/>
</dbReference>
<dbReference type="PIR" id="A32142">
    <property type="entry name" value="DNECFS"/>
</dbReference>
<dbReference type="RefSeq" id="NP_417727.1">
    <property type="nucleotide sequence ID" value="NC_000913.3"/>
</dbReference>
<dbReference type="RefSeq" id="WP_000462905.1">
    <property type="nucleotide sequence ID" value="NZ_STEB01000012.1"/>
</dbReference>
<dbReference type="PDB" id="1ETK">
    <property type="method" value="X-ray"/>
    <property type="resolution" value="2.10 A"/>
    <property type="chains" value="A/B=1-98"/>
</dbReference>
<dbReference type="PDB" id="1ETO">
    <property type="method" value="X-ray"/>
    <property type="resolution" value="1.90 A"/>
    <property type="chains" value="A/B=1-98"/>
</dbReference>
<dbReference type="PDB" id="1ETQ">
    <property type="method" value="X-ray"/>
    <property type="resolution" value="2.80 A"/>
    <property type="chains" value="A/B/C/D=1-98"/>
</dbReference>
<dbReference type="PDB" id="1ETV">
    <property type="method" value="X-ray"/>
    <property type="resolution" value="2.00 A"/>
    <property type="chains" value="A/B=1-98"/>
</dbReference>
<dbReference type="PDB" id="1ETW">
    <property type="method" value="X-ray"/>
    <property type="resolution" value="2.00 A"/>
    <property type="chains" value="A/B=1-98"/>
</dbReference>
<dbReference type="PDB" id="1ETX">
    <property type="method" value="X-ray"/>
    <property type="resolution" value="1.90 A"/>
    <property type="chains" value="A/B=1-98"/>
</dbReference>
<dbReference type="PDB" id="1ETY">
    <property type="method" value="X-ray"/>
    <property type="resolution" value="2.00 A"/>
    <property type="chains" value="A/B=1-98"/>
</dbReference>
<dbReference type="PDB" id="1F36">
    <property type="method" value="X-ray"/>
    <property type="resolution" value="2.65 A"/>
    <property type="chains" value="A/B=1-98"/>
</dbReference>
<dbReference type="PDB" id="1FIA">
    <property type="method" value="X-ray"/>
    <property type="resolution" value="2.00 A"/>
    <property type="chains" value="A/B=1-98"/>
</dbReference>
<dbReference type="PDB" id="1FIP">
    <property type="method" value="X-ray"/>
    <property type="resolution" value="1.90 A"/>
    <property type="chains" value="A/B=1-98"/>
</dbReference>
<dbReference type="PDB" id="3FIS">
    <property type="method" value="X-ray"/>
    <property type="resolution" value="2.30 A"/>
    <property type="chains" value="A/B=1-98"/>
</dbReference>
<dbReference type="PDB" id="3IV5">
    <property type="method" value="X-ray"/>
    <property type="resolution" value="2.90 A"/>
    <property type="chains" value="A/B=1-98"/>
</dbReference>
<dbReference type="PDB" id="3JR9">
    <property type="method" value="X-ray"/>
    <property type="resolution" value="2.90 A"/>
    <property type="chains" value="A/B=1-98"/>
</dbReference>
<dbReference type="PDB" id="3JRA">
    <property type="method" value="X-ray"/>
    <property type="resolution" value="3.11 A"/>
    <property type="chains" value="A/B=1-98"/>
</dbReference>
<dbReference type="PDB" id="3JRB">
    <property type="method" value="X-ray"/>
    <property type="resolution" value="3.10 A"/>
    <property type="chains" value="A/B=1-98"/>
</dbReference>
<dbReference type="PDB" id="3JRC">
    <property type="method" value="X-ray"/>
    <property type="resolution" value="3.08 A"/>
    <property type="chains" value="A/B=1-98"/>
</dbReference>
<dbReference type="PDB" id="3JRD">
    <property type="method" value="X-ray"/>
    <property type="resolution" value="3.10 A"/>
    <property type="chains" value="A/B=1-98"/>
</dbReference>
<dbReference type="PDB" id="3JRE">
    <property type="method" value="X-ray"/>
    <property type="resolution" value="3.17 A"/>
    <property type="chains" value="A/B=1-98"/>
</dbReference>
<dbReference type="PDB" id="3JRF">
    <property type="method" value="X-ray"/>
    <property type="resolution" value="3.05 A"/>
    <property type="chains" value="A/B=1-98"/>
</dbReference>
<dbReference type="PDB" id="3JRG">
    <property type="method" value="X-ray"/>
    <property type="resolution" value="3.11 A"/>
    <property type="chains" value="A/B=1-98"/>
</dbReference>
<dbReference type="PDB" id="3JRH">
    <property type="method" value="X-ray"/>
    <property type="resolution" value="2.88 A"/>
    <property type="chains" value="A/B=1-98"/>
</dbReference>
<dbReference type="PDB" id="3JRI">
    <property type="method" value="X-ray"/>
    <property type="resolution" value="3.11 A"/>
    <property type="chains" value="A/B=1-98"/>
</dbReference>
<dbReference type="PDB" id="4FIS">
    <property type="method" value="X-ray"/>
    <property type="resolution" value="2.30 A"/>
    <property type="chains" value="A/B=1-98"/>
</dbReference>
<dbReference type="PDB" id="5DS9">
    <property type="method" value="X-ray"/>
    <property type="resolution" value="2.56 A"/>
    <property type="chains" value="A/B=1-98"/>
</dbReference>
<dbReference type="PDB" id="5DTD">
    <property type="method" value="X-ray"/>
    <property type="resolution" value="2.64 A"/>
    <property type="chains" value="A/B=1-98"/>
</dbReference>
<dbReference type="PDB" id="5E3L">
    <property type="method" value="X-ray"/>
    <property type="resolution" value="2.66 A"/>
    <property type="chains" value="A/B=1-98"/>
</dbReference>
<dbReference type="PDB" id="5E3M">
    <property type="method" value="X-ray"/>
    <property type="resolution" value="2.89 A"/>
    <property type="chains" value="A/B=1-98"/>
</dbReference>
<dbReference type="PDB" id="5E3N">
    <property type="method" value="X-ray"/>
    <property type="resolution" value="2.66 A"/>
    <property type="chains" value="A/B=1-98"/>
</dbReference>
<dbReference type="PDB" id="5E3O">
    <property type="method" value="X-ray"/>
    <property type="resolution" value="2.78 A"/>
    <property type="chains" value="A/B=1-98"/>
</dbReference>
<dbReference type="PDB" id="6P0S">
    <property type="method" value="X-ray"/>
    <property type="resolution" value="2.70 A"/>
    <property type="chains" value="A/B=1-98"/>
</dbReference>
<dbReference type="PDB" id="6P0T">
    <property type="method" value="X-ray"/>
    <property type="resolution" value="3.60 A"/>
    <property type="chains" value="A/B=1-98"/>
</dbReference>
<dbReference type="PDB" id="6P0U">
    <property type="method" value="X-ray"/>
    <property type="resolution" value="3.30 A"/>
    <property type="chains" value="A/B=1-98"/>
</dbReference>
<dbReference type="PDBsum" id="1ETK"/>
<dbReference type="PDBsum" id="1ETO"/>
<dbReference type="PDBsum" id="1ETQ"/>
<dbReference type="PDBsum" id="1ETV"/>
<dbReference type="PDBsum" id="1ETW"/>
<dbReference type="PDBsum" id="1ETX"/>
<dbReference type="PDBsum" id="1ETY"/>
<dbReference type="PDBsum" id="1F36"/>
<dbReference type="PDBsum" id="1FIA"/>
<dbReference type="PDBsum" id="1FIP"/>
<dbReference type="PDBsum" id="3FIS"/>
<dbReference type="PDBsum" id="3IV5"/>
<dbReference type="PDBsum" id="3JR9"/>
<dbReference type="PDBsum" id="3JRA"/>
<dbReference type="PDBsum" id="3JRB"/>
<dbReference type="PDBsum" id="3JRC"/>
<dbReference type="PDBsum" id="3JRD"/>
<dbReference type="PDBsum" id="3JRE"/>
<dbReference type="PDBsum" id="3JRF"/>
<dbReference type="PDBsum" id="3JRG"/>
<dbReference type="PDBsum" id="3JRH"/>
<dbReference type="PDBsum" id="3JRI"/>
<dbReference type="PDBsum" id="4FIS"/>
<dbReference type="PDBsum" id="5DS9"/>
<dbReference type="PDBsum" id="5DTD"/>
<dbReference type="PDBsum" id="5E3L"/>
<dbReference type="PDBsum" id="5E3M"/>
<dbReference type="PDBsum" id="5E3N"/>
<dbReference type="PDBsum" id="5E3O"/>
<dbReference type="PDBsum" id="6P0S"/>
<dbReference type="PDBsum" id="6P0T"/>
<dbReference type="PDBsum" id="6P0U"/>
<dbReference type="SMR" id="P0A6R3"/>
<dbReference type="BioGRID" id="4261864">
    <property type="interactions" value="301"/>
</dbReference>
<dbReference type="BioGRID" id="852010">
    <property type="interactions" value="1"/>
</dbReference>
<dbReference type="DIP" id="DIP-47975N"/>
<dbReference type="FunCoup" id="P0A6R3">
    <property type="interactions" value="319"/>
</dbReference>
<dbReference type="IntAct" id="P0A6R3">
    <property type="interactions" value="25"/>
</dbReference>
<dbReference type="STRING" id="511145.b3261"/>
<dbReference type="jPOST" id="P0A6R3"/>
<dbReference type="PaxDb" id="511145-b3261"/>
<dbReference type="EnsemblBacteria" id="AAC76293">
    <property type="protein sequence ID" value="AAC76293"/>
    <property type="gene ID" value="b3261"/>
</dbReference>
<dbReference type="GeneID" id="947697"/>
<dbReference type="GeneID" id="98390389"/>
<dbReference type="KEGG" id="ecj:JW3229"/>
<dbReference type="KEGG" id="eco:b3261"/>
<dbReference type="KEGG" id="ecoc:C3026_17740"/>
<dbReference type="PATRIC" id="fig|1411691.4.peg.3467"/>
<dbReference type="EchoBASE" id="EB0313"/>
<dbReference type="eggNOG" id="COG2901">
    <property type="taxonomic scope" value="Bacteria"/>
</dbReference>
<dbReference type="HOGENOM" id="CLU_158040_3_0_6"/>
<dbReference type="InParanoid" id="P0A6R3"/>
<dbReference type="OMA" id="LCEVEAP"/>
<dbReference type="OrthoDB" id="9802388at2"/>
<dbReference type="PhylomeDB" id="P0A6R3"/>
<dbReference type="BioCyc" id="EcoCyc:PD00196"/>
<dbReference type="EvolutionaryTrace" id="P0A6R3"/>
<dbReference type="PRO" id="PR:P0A6R3"/>
<dbReference type="Proteomes" id="UP000000625">
    <property type="component" value="Chromosome"/>
</dbReference>
<dbReference type="CollecTF" id="EXPREG_00000770"/>
<dbReference type="GO" id="GO:0005829">
    <property type="term" value="C:cytosol"/>
    <property type="evidence" value="ECO:0000314"/>
    <property type="project" value="EcoCyc"/>
</dbReference>
<dbReference type="GO" id="GO:0031421">
    <property type="term" value="C:invertasome"/>
    <property type="evidence" value="ECO:0000315"/>
    <property type="project" value="CAFA"/>
</dbReference>
<dbReference type="GO" id="GO:0009295">
    <property type="term" value="C:nucleoid"/>
    <property type="evidence" value="ECO:0007669"/>
    <property type="project" value="UniProtKB-SubCell"/>
</dbReference>
<dbReference type="GO" id="GO:0000786">
    <property type="term" value="C:nucleosome"/>
    <property type="evidence" value="ECO:0000314"/>
    <property type="project" value="EcoCyc"/>
</dbReference>
<dbReference type="GO" id="GO:0032993">
    <property type="term" value="C:protein-DNA complex"/>
    <property type="evidence" value="ECO:0000353"/>
    <property type="project" value="CollecTF"/>
</dbReference>
<dbReference type="GO" id="GO:0001046">
    <property type="term" value="F:core promoter sequence-specific DNA binding"/>
    <property type="evidence" value="ECO:0000315"/>
    <property type="project" value="CAFA"/>
</dbReference>
<dbReference type="GO" id="GO:0003677">
    <property type="term" value="F:DNA binding"/>
    <property type="evidence" value="ECO:0000314"/>
    <property type="project" value="EcoCyc"/>
</dbReference>
<dbReference type="GO" id="GO:0001216">
    <property type="term" value="F:DNA-binding transcription activator activity"/>
    <property type="evidence" value="ECO:0000315"/>
    <property type="project" value="CAFA"/>
</dbReference>
<dbReference type="GO" id="GO:0001217">
    <property type="term" value="F:DNA-binding transcription repressor activity"/>
    <property type="evidence" value="ECO:0000353"/>
    <property type="project" value="CollecTF"/>
</dbReference>
<dbReference type="GO" id="GO:0042803">
    <property type="term" value="F:protein homodimerization activity"/>
    <property type="evidence" value="ECO:0000314"/>
    <property type="project" value="CAFA"/>
</dbReference>
<dbReference type="GO" id="GO:0043565">
    <property type="term" value="F:sequence-specific DNA binding"/>
    <property type="evidence" value="ECO:0000314"/>
    <property type="project" value="EcoliWiki"/>
</dbReference>
<dbReference type="GO" id="GO:0044374">
    <property type="term" value="F:sequence-specific DNA binding, bending"/>
    <property type="evidence" value="ECO:0000315"/>
    <property type="project" value="CAFA"/>
</dbReference>
<dbReference type="GO" id="GO:0000976">
    <property type="term" value="F:transcription cis-regulatory region binding"/>
    <property type="evidence" value="ECO:0000353"/>
    <property type="project" value="CollecTF"/>
</dbReference>
<dbReference type="GO" id="GO:0051276">
    <property type="term" value="P:chromosome organization"/>
    <property type="evidence" value="ECO:0000314"/>
    <property type="project" value="EcoCyc"/>
</dbReference>
<dbReference type="GO" id="GO:0006351">
    <property type="term" value="P:DNA-templated transcription"/>
    <property type="evidence" value="ECO:0000315"/>
    <property type="project" value="CAFA"/>
</dbReference>
<dbReference type="GO" id="GO:0045911">
    <property type="term" value="P:positive regulation of DNA recombination"/>
    <property type="evidence" value="ECO:0000315"/>
    <property type="project" value="CAFA"/>
</dbReference>
<dbReference type="GO" id="GO:0032359">
    <property type="term" value="P:provirus excision"/>
    <property type="evidence" value="ECO:0000315"/>
    <property type="project" value="CAFA"/>
</dbReference>
<dbReference type="GO" id="GO:0006355">
    <property type="term" value="P:regulation of DNA-templated transcription"/>
    <property type="evidence" value="ECO:0000314"/>
    <property type="project" value="EcoCyc"/>
</dbReference>
<dbReference type="GO" id="GO:0009314">
    <property type="term" value="P:response to radiation"/>
    <property type="evidence" value="ECO:0000315"/>
    <property type="project" value="EcoCyc"/>
</dbReference>
<dbReference type="DisProt" id="DP00422"/>
<dbReference type="FunFam" id="1.10.10.60:FF:000006">
    <property type="entry name" value="DNA-binding protein Fis"/>
    <property type="match status" value="1"/>
</dbReference>
<dbReference type="Gene3D" id="1.10.10.60">
    <property type="entry name" value="Homeodomain-like"/>
    <property type="match status" value="1"/>
</dbReference>
<dbReference type="HAMAP" id="MF_00166">
    <property type="entry name" value="DNA_binding_Fis"/>
    <property type="match status" value="1"/>
</dbReference>
<dbReference type="InterPro" id="IPR005412">
    <property type="entry name" value="Fis_DNA-bd"/>
</dbReference>
<dbReference type="InterPro" id="IPR009057">
    <property type="entry name" value="Homeodomain-like_sf"/>
</dbReference>
<dbReference type="InterPro" id="IPR002197">
    <property type="entry name" value="HTH_Fis"/>
</dbReference>
<dbReference type="InterPro" id="IPR050207">
    <property type="entry name" value="Trans_regulatory_Fis"/>
</dbReference>
<dbReference type="NCBIfam" id="NF001659">
    <property type="entry name" value="PRK00430.1"/>
    <property type="match status" value="1"/>
</dbReference>
<dbReference type="PANTHER" id="PTHR47918">
    <property type="entry name" value="DNA-BINDING PROTEIN FIS"/>
    <property type="match status" value="1"/>
</dbReference>
<dbReference type="PANTHER" id="PTHR47918:SF1">
    <property type="entry name" value="DNA-BINDING PROTEIN FIS"/>
    <property type="match status" value="1"/>
</dbReference>
<dbReference type="Pfam" id="PF02954">
    <property type="entry name" value="HTH_8"/>
    <property type="match status" value="1"/>
</dbReference>
<dbReference type="PIRSF" id="PIRSF002097">
    <property type="entry name" value="DNA-binding_Fis"/>
    <property type="match status" value="1"/>
</dbReference>
<dbReference type="PRINTS" id="PR01591">
    <property type="entry name" value="DNABINDNGFIS"/>
</dbReference>
<dbReference type="PRINTS" id="PR01590">
    <property type="entry name" value="HTHFIS"/>
</dbReference>
<dbReference type="SUPFAM" id="SSF46689">
    <property type="entry name" value="Homeodomain-like"/>
    <property type="match status" value="1"/>
</dbReference>
<sequence length="98" mass="11240">MFEQRVNSDVLTVSTVNSQDQVTQKPLRDSVKQALKNYFAQLNGQDVNDLYELVLAEVEQPLLDMVMQYTRGNQTRAALMMGINRGTLRKKLKKYGMN</sequence>
<evidence type="ECO:0000255" key="1">
    <source>
        <dbReference type="HAMAP-Rule" id="MF_00166"/>
    </source>
</evidence>
<evidence type="ECO:0000269" key="2">
    <source>
    </source>
</evidence>
<evidence type="ECO:0000269" key="3">
    <source>
    </source>
</evidence>
<evidence type="ECO:0000269" key="4">
    <source>
    </source>
</evidence>
<evidence type="ECO:0000269" key="5">
    <source>
    </source>
</evidence>
<evidence type="ECO:0007829" key="6">
    <source>
        <dbReference type="PDB" id="1ETO"/>
    </source>
</evidence>
<evidence type="ECO:0007829" key="7">
    <source>
        <dbReference type="PDB" id="3JRD"/>
    </source>
</evidence>
<name>FIS_ECOLI</name>
<proteinExistence type="evidence at protein level"/>